<dbReference type="EC" id="4.1.2.-" evidence="2"/>
<dbReference type="EMBL" id="AB426471">
    <property type="protein sequence ID" value="BAG31008.1"/>
    <property type="molecule type" value="Genomic_DNA"/>
</dbReference>
<dbReference type="SMR" id="B2DEV5"/>
<dbReference type="GO" id="GO:0005737">
    <property type="term" value="C:cytoplasm"/>
    <property type="evidence" value="ECO:0007669"/>
    <property type="project" value="TreeGrafter"/>
</dbReference>
<dbReference type="GO" id="GO:0004372">
    <property type="term" value="F:glycine hydroxymethyltransferase activity"/>
    <property type="evidence" value="ECO:0007669"/>
    <property type="project" value="InterPro"/>
</dbReference>
<dbReference type="GO" id="GO:0016829">
    <property type="term" value="F:lyase activity"/>
    <property type="evidence" value="ECO:0007669"/>
    <property type="project" value="UniProtKB-KW"/>
</dbReference>
<dbReference type="GO" id="GO:0030170">
    <property type="term" value="F:pyridoxal phosphate binding"/>
    <property type="evidence" value="ECO:0007669"/>
    <property type="project" value="InterPro"/>
</dbReference>
<dbReference type="GO" id="GO:0019264">
    <property type="term" value="P:glycine biosynthetic process from serine"/>
    <property type="evidence" value="ECO:0007669"/>
    <property type="project" value="InterPro"/>
</dbReference>
<dbReference type="GO" id="GO:0035999">
    <property type="term" value="P:tetrahydrofolate interconversion"/>
    <property type="evidence" value="ECO:0007669"/>
    <property type="project" value="InterPro"/>
</dbReference>
<dbReference type="Gene3D" id="3.90.1150.10">
    <property type="entry name" value="Aspartate Aminotransferase, domain 1"/>
    <property type="match status" value="1"/>
</dbReference>
<dbReference type="Gene3D" id="3.40.640.10">
    <property type="entry name" value="Type I PLP-dependent aspartate aminotransferase-like (Major domain)"/>
    <property type="match status" value="1"/>
</dbReference>
<dbReference type="InterPro" id="IPR015424">
    <property type="entry name" value="PyrdxlP-dep_Trfase"/>
</dbReference>
<dbReference type="InterPro" id="IPR015421">
    <property type="entry name" value="PyrdxlP-dep_Trfase_major"/>
</dbReference>
<dbReference type="InterPro" id="IPR015422">
    <property type="entry name" value="PyrdxlP-dep_Trfase_small"/>
</dbReference>
<dbReference type="InterPro" id="IPR001085">
    <property type="entry name" value="Ser_HO-MeTrfase"/>
</dbReference>
<dbReference type="InterPro" id="IPR049943">
    <property type="entry name" value="Ser_HO-MeTrfase-like"/>
</dbReference>
<dbReference type="InterPro" id="IPR039429">
    <property type="entry name" value="SHMT-like_dom"/>
</dbReference>
<dbReference type="PANTHER" id="PTHR11680">
    <property type="entry name" value="SERINE HYDROXYMETHYLTRANSFERASE"/>
    <property type="match status" value="1"/>
</dbReference>
<dbReference type="PANTHER" id="PTHR11680:SF35">
    <property type="entry name" value="SERINE HYDROXYMETHYLTRANSFERASE 1"/>
    <property type="match status" value="1"/>
</dbReference>
<dbReference type="Pfam" id="PF00464">
    <property type="entry name" value="SHMT"/>
    <property type="match status" value="1"/>
</dbReference>
<dbReference type="PIRSF" id="PIRSF000412">
    <property type="entry name" value="SHMT"/>
    <property type="match status" value="1"/>
</dbReference>
<dbReference type="SUPFAM" id="SSF53383">
    <property type="entry name" value="PLP-dependent transferases"/>
    <property type="match status" value="1"/>
</dbReference>
<proteinExistence type="evidence at protein level"/>
<organism>
    <name type="scientific">Ralstonia sp</name>
    <dbReference type="NCBI Taxonomy" id="54061"/>
    <lineage>
        <taxon>Bacteria</taxon>
        <taxon>Pseudomonadati</taxon>
        <taxon>Pseudomonadota</taxon>
        <taxon>Betaproteobacteria</taxon>
        <taxon>Burkholderiales</taxon>
        <taxon>Burkholderiaceae</taxon>
        <taxon>Ralstonia</taxon>
    </lineage>
</organism>
<gene>
    <name evidence="5" type="primary">msald</name>
</gene>
<comment type="function">
    <text evidence="2">Catalyzes the reversible interconversion of alpha-methyl-L-serine to L-alanine and formaldehyde (PubMed:18952881). Cannot use alpha-methyl-D-serine, L-serine or D-serine (PubMed:18952881). Cannot use D-alanine instead of L-alanine as the substrate for alpha-methyl-L-serine synthesis (PubMed:18952881). Does not require tetrahydrofolate (THF) for activity (PubMed:18952881).</text>
</comment>
<comment type="catalytic activity">
    <reaction evidence="2">
        <text>2-methyl-L-serine = formaldehyde + L-alanine</text>
        <dbReference type="Rhea" id="RHEA:64164"/>
        <dbReference type="ChEBI" id="CHEBI:16842"/>
        <dbReference type="ChEBI" id="CHEBI:57972"/>
        <dbReference type="ChEBI" id="CHEBI:149759"/>
    </reaction>
</comment>
<comment type="cofactor">
    <cofactor evidence="2">
        <name>pyridoxal 5'-phosphate</name>
        <dbReference type="ChEBI" id="CHEBI:597326"/>
    </cofactor>
</comment>
<comment type="activity regulation">
    <text evidence="2">In the alpha-methyl-L-serine synthesis reaction, activity is inhibited by an excess amount of formaldehyde (at a concentration greater than 10 mM).</text>
</comment>
<comment type="biophysicochemical properties">
    <kinetics>
        <KM evidence="2">12 mM for alpha-methyl-L-serine</KM>
        <KM evidence="2">9.8 mM for formaldehyde</KM>
        <Vmax evidence="2">1.5 umol/min/mg enzyme toward alpha-methyl-L-serine</Vmax>
        <Vmax evidence="2">79.0 umol/min/mg enzyme toward formaldehyde</Vmax>
    </kinetics>
</comment>
<comment type="subunit">
    <text evidence="2">Homodimer.</text>
</comment>
<comment type="biotechnology">
    <text evidence="2">May be used for efficient production of optically pure alpha-methyl-L-serine using L-alanine and formaldehyde.</text>
</comment>
<comment type="similarity">
    <text evidence="4">Belongs to the SHMT family. Alpha-methylserine aldolase subfamily.</text>
</comment>
<protein>
    <recommendedName>
        <fullName evidence="3">Alpha-methylserine aldolase</fullName>
        <ecNumber evidence="2">4.1.2.-</ecNumber>
    </recommendedName>
</protein>
<accession>B2DEV5</accession>
<sequence length="438" mass="47811">MLNARPWVPEGPEEYMQALAKRFAGQTPDQNERDLLAFVEENRVIHERDCFNLNPATNAINPKAEAMLASGVGSRPSLGYPGDKYEMGLEGVEKIEVLAAELVAEVFGAKYAELRVASGALANLYAYMIAAKPGDTVFVPSATIGGHFSHHANGAAGMYGVNSYLMPFDADKYTVDVDRLREDARRLKPKMITLGNSLNLFPHPIKEVREIADEIGALVLFDAAHLCGLIAGHSWQQPLEEGAHLMTLSTYKSLAGPAGGLIVTNDAEVAKRLDTVAYPGMTANFDSARSASIAMTMLDWQVYGREYAAEMVRTSKAFAEALVKEGLPVFARDRGITTSHQFAIEAHDFGGGQAMAKLLRRANILACGIGLPLPEIAGDVNGLRMGTPELVRWGMRSEHMPQLAKFIADVLLGRQVPEEVAPAVTDYRRQFNKLHFLR</sequence>
<feature type="chain" id="PRO_0000461464" description="Alpha-methylserine aldolase">
    <location>
        <begin position="1"/>
        <end position="438"/>
    </location>
</feature>
<feature type="modified residue" description="N6-(pyridoxal phosphate)lysine" evidence="1">
    <location>
        <position position="252"/>
    </location>
</feature>
<reference evidence="5" key="1">
    <citation type="journal article" date="2008" name="Appl. Environ. Microbiol.">
        <title>Purification and gene cloning of alpha-methylserine aldolase from Ralstonia sp. strain AJ110405 and application of the enzyme in the synthesis of alpha-methyl-L-serine.</title>
        <authorList>
            <person name="Nozaki H."/>
            <person name="Kuroda S."/>
            <person name="Watanabe K."/>
            <person name="Yokozeki K."/>
        </authorList>
    </citation>
    <scope>NUCLEOTIDE SEQUENCE [GENOMIC DNA]</scope>
    <scope>PROTEIN SEQUENCE OF 1-30</scope>
    <scope>FUNCTION</scope>
    <scope>CATALYTIC ACTIVITY</scope>
    <scope>COFACTOR</scope>
    <scope>ACTIVITY REGULATION</scope>
    <scope>BIOPHYSICOCHEMICAL PROPERTIES</scope>
    <scope>SUBUNIT</scope>
    <scope>BIOTECHNOLOGY</scope>
    <source>
        <strain>AJ110405</strain>
    </source>
</reference>
<evidence type="ECO:0000250" key="1">
    <source>
        <dbReference type="UniProtKB" id="P0A825"/>
    </source>
</evidence>
<evidence type="ECO:0000269" key="2">
    <source>
    </source>
</evidence>
<evidence type="ECO:0000303" key="3">
    <source>
    </source>
</evidence>
<evidence type="ECO:0000305" key="4"/>
<evidence type="ECO:0000312" key="5">
    <source>
        <dbReference type="EMBL" id="BAG31008.1"/>
    </source>
</evidence>
<name>MSALD_RALSP</name>
<keyword id="KW-0903">Direct protein sequencing</keyword>
<keyword id="KW-0456">Lyase</keyword>
<keyword id="KW-0663">Pyridoxal phosphate</keyword>